<evidence type="ECO:0000255" key="1">
    <source>
        <dbReference type="HAMAP-Rule" id="MF_01569"/>
    </source>
</evidence>
<comment type="function">
    <text evidence="1">Catalyzes the attachment of proline to tRNA(Pro) in a two-step reaction: proline is first activated by ATP to form Pro-AMP and then transferred to the acceptor end of tRNA(Pro). As ProRS can inadvertently accommodate and process non-cognate amino acids such as alanine and cysteine, to avoid such errors it has two additional distinct editing activities against alanine. One activity is designated as 'pretransfer' editing and involves the tRNA(Pro)-independent hydrolysis of activated Ala-AMP. The other activity is designated 'posttransfer' editing and involves deacylation of mischarged Ala-tRNA(Pro). The misacylated Cys-tRNA(Pro) is not edited by ProRS.</text>
</comment>
<comment type="catalytic activity">
    <reaction evidence="1">
        <text>tRNA(Pro) + L-proline + ATP = L-prolyl-tRNA(Pro) + AMP + diphosphate</text>
        <dbReference type="Rhea" id="RHEA:14305"/>
        <dbReference type="Rhea" id="RHEA-COMP:9700"/>
        <dbReference type="Rhea" id="RHEA-COMP:9702"/>
        <dbReference type="ChEBI" id="CHEBI:30616"/>
        <dbReference type="ChEBI" id="CHEBI:33019"/>
        <dbReference type="ChEBI" id="CHEBI:60039"/>
        <dbReference type="ChEBI" id="CHEBI:78442"/>
        <dbReference type="ChEBI" id="CHEBI:78532"/>
        <dbReference type="ChEBI" id="CHEBI:456215"/>
        <dbReference type="EC" id="6.1.1.15"/>
    </reaction>
</comment>
<comment type="subunit">
    <text evidence="1">Homodimer.</text>
</comment>
<comment type="subcellular location">
    <subcellularLocation>
        <location evidence="1">Cytoplasm</location>
    </subcellularLocation>
</comment>
<comment type="domain">
    <text evidence="1">Consists of three domains: the N-terminal catalytic domain, the editing domain and the C-terminal anticodon-binding domain.</text>
</comment>
<comment type="similarity">
    <text evidence="1">Belongs to the class-II aminoacyl-tRNA synthetase family. ProS type 1 subfamily.</text>
</comment>
<gene>
    <name evidence="1" type="primary">proS</name>
    <name type="ordered locus">Syncc9902_1665</name>
</gene>
<organism>
    <name type="scientific">Synechococcus sp. (strain CC9902)</name>
    <dbReference type="NCBI Taxonomy" id="316279"/>
    <lineage>
        <taxon>Bacteria</taxon>
        <taxon>Bacillati</taxon>
        <taxon>Cyanobacteriota</taxon>
        <taxon>Cyanophyceae</taxon>
        <taxon>Synechococcales</taxon>
        <taxon>Synechococcaceae</taxon>
        <taxon>Synechococcus</taxon>
    </lineage>
</organism>
<reference key="1">
    <citation type="submission" date="2005-08" db="EMBL/GenBank/DDBJ databases">
        <title>Complete sequence of Synechococcus sp. CC9902.</title>
        <authorList>
            <person name="Copeland A."/>
            <person name="Lucas S."/>
            <person name="Lapidus A."/>
            <person name="Barry K."/>
            <person name="Detter J.C."/>
            <person name="Glavina T."/>
            <person name="Hammon N."/>
            <person name="Israni S."/>
            <person name="Pitluck S."/>
            <person name="Martinez M."/>
            <person name="Schmutz J."/>
            <person name="Larimer F."/>
            <person name="Land M."/>
            <person name="Kyrpides N."/>
            <person name="Ivanova N."/>
            <person name="Richardson P."/>
        </authorList>
    </citation>
    <scope>NUCLEOTIDE SEQUENCE [LARGE SCALE GENOMIC DNA]</scope>
    <source>
        <strain>CC9902</strain>
    </source>
</reference>
<accession>Q3AWR9</accession>
<sequence>MRVSRLLLVTLRDVPAEAEIASHQLLLRGGYIRRIGSGIYGYLPLMWKVIQRITAIVRDELNTAGAQETLLPQLHPAELWQRSGRWQGYTAGEGIMFHLEDRQGRELGLGPTHEEVVTSLAGELLQSYKQLPVNLYQVQTKFRDEIRPRFGLMRGREFIMKDAYSFHANEADLQNTYLEMDQAYRRIFERCGLAAVPVDADSGAIGGAASQEFMVTADAGEDLILLSDDGTYAANQEKAISTPSKAIPLEGASMELISTPDETSIDVLCRSHGWHQSQLIKVLLFIARLDDGVEQPLLISLRGDQDLNEVKLINAVGRLSGQEVLDCRPIQTEDLNKQGIDTIPLGFIGPDLDDGVLRSARSWTKQFLRCTDSTAAAMDRMVCGANQPDQHRLYATWADLGGAPKSLDLRKARAGEACVHNPEAHLIEKRGIEVGHIFQLGRKYSEAMDSRFTNEAGKTEHFWMGCYGIGISRLAQAAVEQHHDDAGICWPAAIAPYEAIVVVANMQDQTQAELGESLYKQLLAAGVDALFDDRKERAGVKFKDADLIGIPWRVVVGRDASDGVVELVERANRAVQKLPHADALKELLRTLRP</sequence>
<feature type="chain" id="PRO_0000248794" description="Proline--tRNA ligase">
    <location>
        <begin position="1"/>
        <end position="593"/>
    </location>
</feature>
<protein>
    <recommendedName>
        <fullName evidence="1">Proline--tRNA ligase</fullName>
        <ecNumber evidence="1">6.1.1.15</ecNumber>
    </recommendedName>
    <alternativeName>
        <fullName evidence="1">Prolyl-tRNA synthetase</fullName>
        <shortName evidence="1">ProRS</shortName>
    </alternativeName>
</protein>
<name>SYP_SYNS9</name>
<proteinExistence type="inferred from homology"/>
<keyword id="KW-0030">Aminoacyl-tRNA synthetase</keyword>
<keyword id="KW-0067">ATP-binding</keyword>
<keyword id="KW-0963">Cytoplasm</keyword>
<keyword id="KW-0436">Ligase</keyword>
<keyword id="KW-0547">Nucleotide-binding</keyword>
<keyword id="KW-0648">Protein biosynthesis</keyword>
<keyword id="KW-1185">Reference proteome</keyword>
<dbReference type="EC" id="6.1.1.15" evidence="1"/>
<dbReference type="EMBL" id="CP000097">
    <property type="protein sequence ID" value="ABB26623.1"/>
    <property type="molecule type" value="Genomic_DNA"/>
</dbReference>
<dbReference type="RefSeq" id="WP_011360434.1">
    <property type="nucleotide sequence ID" value="NC_007513.1"/>
</dbReference>
<dbReference type="SMR" id="Q3AWR9"/>
<dbReference type="STRING" id="316279.Syncc9902_1665"/>
<dbReference type="KEGG" id="sye:Syncc9902_1665"/>
<dbReference type="eggNOG" id="COG0442">
    <property type="taxonomic scope" value="Bacteria"/>
</dbReference>
<dbReference type="HOGENOM" id="CLU_016739_0_0_3"/>
<dbReference type="OrthoDB" id="9809052at2"/>
<dbReference type="Proteomes" id="UP000002712">
    <property type="component" value="Chromosome"/>
</dbReference>
<dbReference type="GO" id="GO:0005829">
    <property type="term" value="C:cytosol"/>
    <property type="evidence" value="ECO:0007669"/>
    <property type="project" value="TreeGrafter"/>
</dbReference>
<dbReference type="GO" id="GO:0002161">
    <property type="term" value="F:aminoacyl-tRNA deacylase activity"/>
    <property type="evidence" value="ECO:0007669"/>
    <property type="project" value="InterPro"/>
</dbReference>
<dbReference type="GO" id="GO:0005524">
    <property type="term" value="F:ATP binding"/>
    <property type="evidence" value="ECO:0007669"/>
    <property type="project" value="UniProtKB-UniRule"/>
</dbReference>
<dbReference type="GO" id="GO:0004827">
    <property type="term" value="F:proline-tRNA ligase activity"/>
    <property type="evidence" value="ECO:0007669"/>
    <property type="project" value="UniProtKB-UniRule"/>
</dbReference>
<dbReference type="GO" id="GO:0006433">
    <property type="term" value="P:prolyl-tRNA aminoacylation"/>
    <property type="evidence" value="ECO:0007669"/>
    <property type="project" value="UniProtKB-UniRule"/>
</dbReference>
<dbReference type="CDD" id="cd04334">
    <property type="entry name" value="ProRS-INS"/>
    <property type="match status" value="1"/>
</dbReference>
<dbReference type="CDD" id="cd00861">
    <property type="entry name" value="ProRS_anticodon_short"/>
    <property type="match status" value="1"/>
</dbReference>
<dbReference type="CDD" id="cd00779">
    <property type="entry name" value="ProRS_core_prok"/>
    <property type="match status" value="1"/>
</dbReference>
<dbReference type="Gene3D" id="3.40.50.800">
    <property type="entry name" value="Anticodon-binding domain"/>
    <property type="match status" value="1"/>
</dbReference>
<dbReference type="Gene3D" id="3.30.930.10">
    <property type="entry name" value="Bira Bifunctional Protein, Domain 2"/>
    <property type="match status" value="2"/>
</dbReference>
<dbReference type="HAMAP" id="MF_01569">
    <property type="entry name" value="Pro_tRNA_synth_type1"/>
    <property type="match status" value="1"/>
</dbReference>
<dbReference type="InterPro" id="IPR002314">
    <property type="entry name" value="aa-tRNA-synt_IIb"/>
</dbReference>
<dbReference type="InterPro" id="IPR006195">
    <property type="entry name" value="aa-tRNA-synth_II"/>
</dbReference>
<dbReference type="InterPro" id="IPR045864">
    <property type="entry name" value="aa-tRNA-synth_II/BPL/LPL"/>
</dbReference>
<dbReference type="InterPro" id="IPR004154">
    <property type="entry name" value="Anticodon-bd"/>
</dbReference>
<dbReference type="InterPro" id="IPR036621">
    <property type="entry name" value="Anticodon-bd_dom_sf"/>
</dbReference>
<dbReference type="InterPro" id="IPR002316">
    <property type="entry name" value="Pro-tRNA-ligase_IIa"/>
</dbReference>
<dbReference type="InterPro" id="IPR004500">
    <property type="entry name" value="Pro-tRNA-synth_IIa_bac-type"/>
</dbReference>
<dbReference type="InterPro" id="IPR023717">
    <property type="entry name" value="Pro-tRNA-Synthase_IIa_type1"/>
</dbReference>
<dbReference type="InterPro" id="IPR050062">
    <property type="entry name" value="Pro-tRNA_synthetase"/>
</dbReference>
<dbReference type="InterPro" id="IPR044140">
    <property type="entry name" value="ProRS_anticodon_short"/>
</dbReference>
<dbReference type="InterPro" id="IPR033730">
    <property type="entry name" value="ProRS_core_prok"/>
</dbReference>
<dbReference type="InterPro" id="IPR036754">
    <property type="entry name" value="YbaK/aa-tRNA-synt-asso_dom_sf"/>
</dbReference>
<dbReference type="NCBIfam" id="NF006625">
    <property type="entry name" value="PRK09194.1"/>
    <property type="match status" value="1"/>
</dbReference>
<dbReference type="NCBIfam" id="TIGR00409">
    <property type="entry name" value="proS_fam_II"/>
    <property type="match status" value="1"/>
</dbReference>
<dbReference type="PANTHER" id="PTHR42753">
    <property type="entry name" value="MITOCHONDRIAL RIBOSOME PROTEIN L39/PROLYL-TRNA LIGASE FAMILY MEMBER"/>
    <property type="match status" value="1"/>
</dbReference>
<dbReference type="PANTHER" id="PTHR42753:SF2">
    <property type="entry name" value="PROLINE--TRNA LIGASE"/>
    <property type="match status" value="1"/>
</dbReference>
<dbReference type="Pfam" id="PF03129">
    <property type="entry name" value="HGTP_anticodon"/>
    <property type="match status" value="1"/>
</dbReference>
<dbReference type="Pfam" id="PF00587">
    <property type="entry name" value="tRNA-synt_2b"/>
    <property type="match status" value="1"/>
</dbReference>
<dbReference type="PRINTS" id="PR01046">
    <property type="entry name" value="TRNASYNTHPRO"/>
</dbReference>
<dbReference type="SUPFAM" id="SSF52954">
    <property type="entry name" value="Class II aaRS ABD-related"/>
    <property type="match status" value="1"/>
</dbReference>
<dbReference type="SUPFAM" id="SSF55681">
    <property type="entry name" value="Class II aaRS and biotin synthetases"/>
    <property type="match status" value="1"/>
</dbReference>
<dbReference type="SUPFAM" id="SSF55826">
    <property type="entry name" value="YbaK/ProRS associated domain"/>
    <property type="match status" value="1"/>
</dbReference>
<dbReference type="PROSITE" id="PS50862">
    <property type="entry name" value="AA_TRNA_LIGASE_II"/>
    <property type="match status" value="1"/>
</dbReference>